<gene>
    <name evidence="1" type="primary">proS</name>
    <name type="ordered locus">Francci3_4267</name>
</gene>
<sequence length="468" mass="51239">MAVLTSRSTDFPRWYQDVLAKAELADNGPVRGTMVIRPYGYAIWERMQAEVDSRIKAAGAVNAYFPLFIPESYLRREAEHVEGFSPELAVVTIGGGKELEEPVVVRPTSETVIGEYLAKWTQSYRDLPLLLNQWANVVRWELRPRLFLRSSEFLWQEGHTAHADEADAAAYARRIALEVYRDFMTQVLAVPVFVGVKTRRERFAGATNTMTCEGMMGDGKALQMATSHELGQNFARAFDIDFLGADGARHLAWTTSWGCSTRMVGGLIMAHGDDNGLRVPPRLAPTQVVVLPVRDEETVVAKARQIAAALTDAGLRVQVDARPGLSFGRRVTDAEIKGIPVRVEVGPRDLAAGNVTLVRRDTSEKVPVPLAEVATRVPVLLGEVQADLYAEALALRESRTTDVATVAEAARAAQAGFARIPWRLVGEEGEAELAEEALTVRCIQTPDGGIPEAGSDADDLVCLIARSY</sequence>
<feature type="chain" id="PRO_0000249129" description="Proline--tRNA ligase">
    <location>
        <begin position="1"/>
        <end position="468"/>
    </location>
</feature>
<accession>Q2J529</accession>
<protein>
    <recommendedName>
        <fullName evidence="1">Proline--tRNA ligase</fullName>
        <ecNumber evidence="1">6.1.1.15</ecNumber>
    </recommendedName>
    <alternativeName>
        <fullName evidence="1">Prolyl-tRNA synthetase</fullName>
        <shortName evidence="1">ProRS</shortName>
    </alternativeName>
</protein>
<organism>
    <name type="scientific">Frankia casuarinae (strain DSM 45818 / CECT 9043 / HFP020203 / CcI3)</name>
    <dbReference type="NCBI Taxonomy" id="106370"/>
    <lineage>
        <taxon>Bacteria</taxon>
        <taxon>Bacillati</taxon>
        <taxon>Actinomycetota</taxon>
        <taxon>Actinomycetes</taxon>
        <taxon>Frankiales</taxon>
        <taxon>Frankiaceae</taxon>
        <taxon>Frankia</taxon>
    </lineage>
</organism>
<comment type="function">
    <text evidence="1">Catalyzes the attachment of proline to tRNA(Pro) in a two-step reaction: proline is first activated by ATP to form Pro-AMP and then transferred to the acceptor end of tRNA(Pro).</text>
</comment>
<comment type="catalytic activity">
    <reaction evidence="1">
        <text>tRNA(Pro) + L-proline + ATP = L-prolyl-tRNA(Pro) + AMP + diphosphate</text>
        <dbReference type="Rhea" id="RHEA:14305"/>
        <dbReference type="Rhea" id="RHEA-COMP:9700"/>
        <dbReference type="Rhea" id="RHEA-COMP:9702"/>
        <dbReference type="ChEBI" id="CHEBI:30616"/>
        <dbReference type="ChEBI" id="CHEBI:33019"/>
        <dbReference type="ChEBI" id="CHEBI:60039"/>
        <dbReference type="ChEBI" id="CHEBI:78442"/>
        <dbReference type="ChEBI" id="CHEBI:78532"/>
        <dbReference type="ChEBI" id="CHEBI:456215"/>
        <dbReference type="EC" id="6.1.1.15"/>
    </reaction>
</comment>
<comment type="subunit">
    <text evidence="1">Homodimer.</text>
</comment>
<comment type="subcellular location">
    <subcellularLocation>
        <location evidence="1">Cytoplasm</location>
    </subcellularLocation>
</comment>
<comment type="domain">
    <text evidence="1">Consists of three domains: the N-terminal catalytic domain, the anticodon-binding domain and the C-terminal extension.</text>
</comment>
<comment type="similarity">
    <text evidence="1">Belongs to the class-II aminoacyl-tRNA synthetase family. ProS type 3 subfamily.</text>
</comment>
<name>SYP_FRACC</name>
<dbReference type="EC" id="6.1.1.15" evidence="1"/>
<dbReference type="EMBL" id="CP000249">
    <property type="protein sequence ID" value="ABD13613.1"/>
    <property type="molecule type" value="Genomic_DNA"/>
</dbReference>
<dbReference type="RefSeq" id="WP_011438621.1">
    <property type="nucleotide sequence ID" value="NZ_LRTJ01000007.1"/>
</dbReference>
<dbReference type="SMR" id="Q2J529"/>
<dbReference type="STRING" id="106370.Francci3_4267"/>
<dbReference type="KEGG" id="fra:Francci3_4267"/>
<dbReference type="eggNOG" id="COG0442">
    <property type="taxonomic scope" value="Bacteria"/>
</dbReference>
<dbReference type="HOGENOM" id="CLU_001882_4_2_11"/>
<dbReference type="OrthoDB" id="9809052at2"/>
<dbReference type="PhylomeDB" id="Q2J529"/>
<dbReference type="Proteomes" id="UP000001937">
    <property type="component" value="Chromosome"/>
</dbReference>
<dbReference type="GO" id="GO:0017101">
    <property type="term" value="C:aminoacyl-tRNA synthetase multienzyme complex"/>
    <property type="evidence" value="ECO:0007669"/>
    <property type="project" value="TreeGrafter"/>
</dbReference>
<dbReference type="GO" id="GO:0005737">
    <property type="term" value="C:cytoplasm"/>
    <property type="evidence" value="ECO:0007669"/>
    <property type="project" value="UniProtKB-SubCell"/>
</dbReference>
<dbReference type="GO" id="GO:0005524">
    <property type="term" value="F:ATP binding"/>
    <property type="evidence" value="ECO:0007669"/>
    <property type="project" value="UniProtKB-UniRule"/>
</dbReference>
<dbReference type="GO" id="GO:0004827">
    <property type="term" value="F:proline-tRNA ligase activity"/>
    <property type="evidence" value="ECO:0007669"/>
    <property type="project" value="UniProtKB-UniRule"/>
</dbReference>
<dbReference type="GO" id="GO:0006433">
    <property type="term" value="P:prolyl-tRNA aminoacylation"/>
    <property type="evidence" value="ECO:0007669"/>
    <property type="project" value="UniProtKB-UniRule"/>
</dbReference>
<dbReference type="CDD" id="cd00778">
    <property type="entry name" value="ProRS_core_arch_euk"/>
    <property type="match status" value="1"/>
</dbReference>
<dbReference type="FunFam" id="3.30.930.10:FF:000037">
    <property type="entry name" value="Proline--tRNA ligase"/>
    <property type="match status" value="1"/>
</dbReference>
<dbReference type="Gene3D" id="3.40.50.800">
    <property type="entry name" value="Anticodon-binding domain"/>
    <property type="match status" value="1"/>
</dbReference>
<dbReference type="Gene3D" id="3.30.930.10">
    <property type="entry name" value="Bira Bifunctional Protein, Domain 2"/>
    <property type="match status" value="1"/>
</dbReference>
<dbReference type="HAMAP" id="MF_01571">
    <property type="entry name" value="Pro_tRNA_synth_type3"/>
    <property type="match status" value="1"/>
</dbReference>
<dbReference type="InterPro" id="IPR002314">
    <property type="entry name" value="aa-tRNA-synt_IIb"/>
</dbReference>
<dbReference type="InterPro" id="IPR006195">
    <property type="entry name" value="aa-tRNA-synth_II"/>
</dbReference>
<dbReference type="InterPro" id="IPR045864">
    <property type="entry name" value="aa-tRNA-synth_II/BPL/LPL"/>
</dbReference>
<dbReference type="InterPro" id="IPR004154">
    <property type="entry name" value="Anticodon-bd"/>
</dbReference>
<dbReference type="InterPro" id="IPR036621">
    <property type="entry name" value="Anticodon-bd_dom_sf"/>
</dbReference>
<dbReference type="InterPro" id="IPR002316">
    <property type="entry name" value="Pro-tRNA-ligase_IIa"/>
</dbReference>
<dbReference type="InterPro" id="IPR004499">
    <property type="entry name" value="Pro-tRNA-ligase_IIa_arc-type"/>
</dbReference>
<dbReference type="InterPro" id="IPR016061">
    <property type="entry name" value="Pro-tRNA_ligase_II_C"/>
</dbReference>
<dbReference type="InterPro" id="IPR033721">
    <property type="entry name" value="ProRS_core_arch_euk"/>
</dbReference>
<dbReference type="NCBIfam" id="TIGR00408">
    <property type="entry name" value="proS_fam_I"/>
    <property type="match status" value="1"/>
</dbReference>
<dbReference type="PANTHER" id="PTHR43382:SF3">
    <property type="entry name" value="PROLINE--TRNA LIGASE, CHLOROPLASTIC_MITOCHONDRIAL"/>
    <property type="match status" value="1"/>
</dbReference>
<dbReference type="PANTHER" id="PTHR43382">
    <property type="entry name" value="PROLYL-TRNA SYNTHETASE"/>
    <property type="match status" value="1"/>
</dbReference>
<dbReference type="Pfam" id="PF03129">
    <property type="entry name" value="HGTP_anticodon"/>
    <property type="match status" value="1"/>
</dbReference>
<dbReference type="Pfam" id="PF00587">
    <property type="entry name" value="tRNA-synt_2b"/>
    <property type="match status" value="1"/>
</dbReference>
<dbReference type="PRINTS" id="PR01046">
    <property type="entry name" value="TRNASYNTHPRO"/>
</dbReference>
<dbReference type="SMART" id="SM00946">
    <property type="entry name" value="ProRS-C_1"/>
    <property type="match status" value="1"/>
</dbReference>
<dbReference type="SUPFAM" id="SSF52954">
    <property type="entry name" value="Class II aaRS ABD-related"/>
    <property type="match status" value="1"/>
</dbReference>
<dbReference type="SUPFAM" id="SSF55681">
    <property type="entry name" value="Class II aaRS and biotin synthetases"/>
    <property type="match status" value="1"/>
</dbReference>
<dbReference type="PROSITE" id="PS50862">
    <property type="entry name" value="AA_TRNA_LIGASE_II"/>
    <property type="match status" value="1"/>
</dbReference>
<evidence type="ECO:0000255" key="1">
    <source>
        <dbReference type="HAMAP-Rule" id="MF_01571"/>
    </source>
</evidence>
<keyword id="KW-0030">Aminoacyl-tRNA synthetase</keyword>
<keyword id="KW-0067">ATP-binding</keyword>
<keyword id="KW-0963">Cytoplasm</keyword>
<keyword id="KW-0436">Ligase</keyword>
<keyword id="KW-0547">Nucleotide-binding</keyword>
<keyword id="KW-0648">Protein biosynthesis</keyword>
<keyword id="KW-1185">Reference proteome</keyword>
<proteinExistence type="inferred from homology"/>
<reference key="1">
    <citation type="journal article" date="2007" name="Genome Res.">
        <title>Genome characteristics of facultatively symbiotic Frankia sp. strains reflect host range and host plant biogeography.</title>
        <authorList>
            <person name="Normand P."/>
            <person name="Lapierre P."/>
            <person name="Tisa L.S."/>
            <person name="Gogarten J.P."/>
            <person name="Alloisio N."/>
            <person name="Bagnarol E."/>
            <person name="Bassi C.A."/>
            <person name="Berry A.M."/>
            <person name="Bickhart D.M."/>
            <person name="Choisne N."/>
            <person name="Couloux A."/>
            <person name="Cournoyer B."/>
            <person name="Cruveiller S."/>
            <person name="Daubin V."/>
            <person name="Demange N."/>
            <person name="Francino M.P."/>
            <person name="Goltsman E."/>
            <person name="Huang Y."/>
            <person name="Kopp O.R."/>
            <person name="Labarre L."/>
            <person name="Lapidus A."/>
            <person name="Lavire C."/>
            <person name="Marechal J."/>
            <person name="Martinez M."/>
            <person name="Mastronunzio J.E."/>
            <person name="Mullin B.C."/>
            <person name="Niemann J."/>
            <person name="Pujic P."/>
            <person name="Rawnsley T."/>
            <person name="Rouy Z."/>
            <person name="Schenowitz C."/>
            <person name="Sellstedt A."/>
            <person name="Tavares F."/>
            <person name="Tomkins J.P."/>
            <person name="Vallenet D."/>
            <person name="Valverde C."/>
            <person name="Wall L.G."/>
            <person name="Wang Y."/>
            <person name="Medigue C."/>
            <person name="Benson D.R."/>
        </authorList>
    </citation>
    <scope>NUCLEOTIDE SEQUENCE [LARGE SCALE GENOMIC DNA]</scope>
    <source>
        <strain>DSM 45818 / CECT 9043 / HFP020203 / CcI3</strain>
    </source>
</reference>